<accession>P39466</accession>
<accession>Q4JAH8</accession>
<name>RPO7_SULAC</name>
<protein>
    <recommendedName>
        <fullName evidence="1">DNA-directed RNA polymerase subunit Rpo7</fullName>
        <ecNumber evidence="1 4">2.7.7.6</ecNumber>
    </recommendedName>
    <alternativeName>
        <fullName evidence="1">DNA-directed RNA polymerase subunit E</fullName>
    </alternativeName>
</protein>
<dbReference type="EC" id="2.7.7.6" evidence="1 4"/>
<dbReference type="EMBL" id="X75411">
    <property type="protein sequence ID" value="CAA53164.1"/>
    <property type="status" value="ALT_FRAME"/>
    <property type="molecule type" value="Genomic_DNA"/>
</dbReference>
<dbReference type="EMBL" id="CP000077">
    <property type="protein sequence ID" value="AAY80201.1"/>
    <property type="molecule type" value="Genomic_DNA"/>
</dbReference>
<dbReference type="PIR" id="S42389">
    <property type="entry name" value="S38658"/>
</dbReference>
<dbReference type="RefSeq" id="WP_011277703.1">
    <property type="nucleotide sequence ID" value="NC_007181.1"/>
</dbReference>
<dbReference type="PDB" id="7OK0">
    <property type="method" value="EM"/>
    <property type="resolution" value="2.90 A"/>
    <property type="chains" value="E=1-183"/>
</dbReference>
<dbReference type="PDB" id="7OQ4">
    <property type="method" value="EM"/>
    <property type="resolution" value="3.27 A"/>
    <property type="chains" value="E=1-183"/>
</dbReference>
<dbReference type="PDB" id="7OQY">
    <property type="method" value="EM"/>
    <property type="resolution" value="2.61 A"/>
    <property type="chains" value="E=1-183"/>
</dbReference>
<dbReference type="PDBsum" id="7OK0"/>
<dbReference type="PDBsum" id="7OQ4"/>
<dbReference type="PDBsum" id="7OQY"/>
<dbReference type="EMDB" id="EMD-12960"/>
<dbReference type="EMDB" id="EMD-13026"/>
<dbReference type="EMDB" id="EMD-13034"/>
<dbReference type="SMR" id="P39466"/>
<dbReference type="STRING" id="330779.Saci_0834"/>
<dbReference type="GeneID" id="14551347"/>
<dbReference type="KEGG" id="sai:Saci_0834"/>
<dbReference type="PATRIC" id="fig|330779.12.peg.798"/>
<dbReference type="eggNOG" id="arCOG00675">
    <property type="taxonomic scope" value="Archaea"/>
</dbReference>
<dbReference type="HOGENOM" id="CLU_117966_0_0_2"/>
<dbReference type="BRENDA" id="2.7.7.6">
    <property type="organism ID" value="6160"/>
</dbReference>
<dbReference type="Proteomes" id="UP000001018">
    <property type="component" value="Chromosome"/>
</dbReference>
<dbReference type="GO" id="GO:0005737">
    <property type="term" value="C:cytoplasm"/>
    <property type="evidence" value="ECO:0007669"/>
    <property type="project" value="UniProtKB-SubCell"/>
</dbReference>
<dbReference type="GO" id="GO:0000428">
    <property type="term" value="C:DNA-directed RNA polymerase complex"/>
    <property type="evidence" value="ECO:0000314"/>
    <property type="project" value="UniProtKB"/>
</dbReference>
<dbReference type="GO" id="GO:0003677">
    <property type="term" value="F:DNA binding"/>
    <property type="evidence" value="ECO:0007669"/>
    <property type="project" value="InterPro"/>
</dbReference>
<dbReference type="GO" id="GO:0003899">
    <property type="term" value="F:DNA-directed RNA polymerase activity"/>
    <property type="evidence" value="ECO:0000314"/>
    <property type="project" value="UniProtKB"/>
</dbReference>
<dbReference type="GO" id="GO:0006351">
    <property type="term" value="P:DNA-templated transcription"/>
    <property type="evidence" value="ECO:0000314"/>
    <property type="project" value="UniProtKB"/>
</dbReference>
<dbReference type="GO" id="GO:0006352">
    <property type="term" value="P:DNA-templated transcription initiation"/>
    <property type="evidence" value="ECO:0007669"/>
    <property type="project" value="InterPro"/>
</dbReference>
<dbReference type="CDD" id="cd04331">
    <property type="entry name" value="RNAP_E_N"/>
    <property type="match status" value="1"/>
</dbReference>
<dbReference type="CDD" id="cd04460">
    <property type="entry name" value="S1_RpoE"/>
    <property type="match status" value="1"/>
</dbReference>
<dbReference type="Gene3D" id="2.40.50.140">
    <property type="entry name" value="Nucleic acid-binding proteins"/>
    <property type="match status" value="1"/>
</dbReference>
<dbReference type="Gene3D" id="3.30.1490.120">
    <property type="entry name" value="RNA polymerase Rpb7-like, N-terminal domain"/>
    <property type="match status" value="1"/>
</dbReference>
<dbReference type="HAMAP" id="MF_00865">
    <property type="entry name" value="RNApol_arch_Rpo7"/>
    <property type="match status" value="1"/>
</dbReference>
<dbReference type="InterPro" id="IPR012340">
    <property type="entry name" value="NA-bd_OB-fold"/>
</dbReference>
<dbReference type="InterPro" id="IPR036898">
    <property type="entry name" value="RNA_pol_Rpb7-like_N_sf"/>
</dbReference>
<dbReference type="InterPro" id="IPR004519">
    <property type="entry name" value="RNAP_E/RPC8"/>
</dbReference>
<dbReference type="InterPro" id="IPR046399">
    <property type="entry name" value="RNApol_Rpo7"/>
</dbReference>
<dbReference type="InterPro" id="IPR045113">
    <property type="entry name" value="Rpb7-like"/>
</dbReference>
<dbReference type="InterPro" id="IPR005576">
    <property type="entry name" value="Rpb7-like_N"/>
</dbReference>
<dbReference type="InterPro" id="IPR003029">
    <property type="entry name" value="S1_domain"/>
</dbReference>
<dbReference type="NCBIfam" id="NF006333">
    <property type="entry name" value="PRK08563.1"/>
    <property type="match status" value="1"/>
</dbReference>
<dbReference type="NCBIfam" id="TIGR00448">
    <property type="entry name" value="rpoE"/>
    <property type="match status" value="1"/>
</dbReference>
<dbReference type="PANTHER" id="PTHR12709:SF4">
    <property type="entry name" value="DNA-DIRECTED RNA POLYMERASE II SUBUNIT RPB7"/>
    <property type="match status" value="1"/>
</dbReference>
<dbReference type="PANTHER" id="PTHR12709">
    <property type="entry name" value="DNA-DIRECTED RNA POLYMERASE II, III"/>
    <property type="match status" value="1"/>
</dbReference>
<dbReference type="Pfam" id="PF00575">
    <property type="entry name" value="S1"/>
    <property type="match status" value="1"/>
</dbReference>
<dbReference type="Pfam" id="PF03876">
    <property type="entry name" value="SHS2_Rpb7-N"/>
    <property type="match status" value="1"/>
</dbReference>
<dbReference type="SMART" id="SM00316">
    <property type="entry name" value="S1"/>
    <property type="match status" value="1"/>
</dbReference>
<dbReference type="SUPFAM" id="SSF88798">
    <property type="entry name" value="N-terminal, heterodimerisation domain of RBP7 (RpoE)"/>
    <property type="match status" value="1"/>
</dbReference>
<dbReference type="SUPFAM" id="SSF50249">
    <property type="entry name" value="Nucleic acid-binding proteins"/>
    <property type="match status" value="1"/>
</dbReference>
<dbReference type="PROSITE" id="PS50126">
    <property type="entry name" value="S1"/>
    <property type="match status" value="1"/>
</dbReference>
<reference key="1">
    <citation type="journal article" date="1994" name="Nucleic Acids Res.">
        <title>A subunit of an archaeal DNA-dependent RNA polymerase contains the S1 motif.</title>
        <authorList>
            <person name="Langer D."/>
            <person name="Lottspeich F."/>
            <person name="Zillig W."/>
        </authorList>
    </citation>
    <scope>NUCLEOTIDE SEQUENCE [GENOMIC DNA]</scope>
    <scope>PARTIAL PROTEIN SEQUENCE</scope>
    <source>
        <strain>ATCC 33909 / DSM 639 / JCM 8929 / NBRC 15157 / NCIMB 11770</strain>
    </source>
</reference>
<reference key="2">
    <citation type="journal article" date="2005" name="J. Bacteriol.">
        <title>The genome of Sulfolobus acidocaldarius, a model organism of the Crenarchaeota.</title>
        <authorList>
            <person name="Chen L."/>
            <person name="Bruegger K."/>
            <person name="Skovgaard M."/>
            <person name="Redder P."/>
            <person name="She Q."/>
            <person name="Torarinsson E."/>
            <person name="Greve B."/>
            <person name="Awayez M."/>
            <person name="Zibat A."/>
            <person name="Klenk H.-P."/>
            <person name="Garrett R.A."/>
        </authorList>
    </citation>
    <scope>NUCLEOTIDE SEQUENCE [LARGE SCALE GENOMIC DNA]</scope>
    <source>
        <strain>ATCC 33909 / DSM 639 / JCM 8929 / NBRC 15157 / NCIMB 11770</strain>
    </source>
</reference>
<reference key="3">
    <citation type="journal article" date="1992" name="Proc. Natl. Acad. Sci. U.S.A.">
        <title>Component H of the DNA-dependent RNA polymerases of Archaea is homologous to a subunit shared by the three eucaryal nuclear RNA polymerases.</title>
        <authorList>
            <person name="Klenk H.-P."/>
            <person name="Palm P."/>
            <person name="Lottspeich F."/>
            <person name="Zillig W."/>
        </authorList>
    </citation>
    <scope>SUBUNIT</scope>
    <source>
        <strain>ATCC 33909 / DSM 639 / JCM 8929 / NBRC 15157 / NCIMB 11770</strain>
    </source>
</reference>
<reference key="4">
    <citation type="journal article" date="1994" name="Syst. Appl. Microbiol.">
        <title>Structure and Function of the DNA-Dependent RNA Polymerase of Sulfolobus.</title>
        <authorList>
            <person name="Lanzendorfer M."/>
            <person name="Langer D."/>
            <person name="Hain J."/>
            <person name="Klenk H.-P."/>
            <person name="Holz I."/>
            <person name="Arnold-Ammer I."/>
            <person name="Zillig W."/>
        </authorList>
    </citation>
    <scope>FUNCTION</scope>
    <scope>CATALYTIC ACTIVITY</scope>
    <scope>SUBUNIT</scope>
    <source>
        <strain>ATCC 33909 / DSM 639 / JCM 8929 / NBRC 15157 / NCIMB 11770</strain>
    </source>
</reference>
<reference evidence="6 7 8" key="5">
    <citation type="journal article" date="2021" name="Nat. Commun.">
        <title>Structural basis of RNA polymerase inhibition by viral and host factors.</title>
        <authorList>
            <person name="Pilotto S."/>
            <person name="Fouqueau T."/>
            <person name="Lukoyanova N."/>
            <person name="Sheppard C."/>
            <person name="Lucas-Staat S."/>
            <person name="Diaz-Santin L.M."/>
            <person name="Matelska D."/>
            <person name="Prangishvili D."/>
            <person name="Cheung A.C.M."/>
            <person name="Werner F."/>
        </authorList>
    </citation>
    <scope>STRUCTURE BY ELECTRON MICROSCOPY (2.61 ANGSTROMS) OF RNAP WITH AND WITHOUT INHIBITORS</scope>
    <scope>SUBUNIT</scope>
    <source>
        <strain>ATCC 33909 / DSM 639 / JCM 8929 / NBRC 15157 / NCIMB 11770</strain>
    </source>
</reference>
<keyword id="KW-0002">3D-structure</keyword>
<keyword id="KW-0963">Cytoplasm</keyword>
<keyword id="KW-0903">Direct protein sequencing</keyword>
<keyword id="KW-0240">DNA-directed RNA polymerase</keyword>
<keyword id="KW-0548">Nucleotidyltransferase</keyword>
<keyword id="KW-1185">Reference proteome</keyword>
<keyword id="KW-0804">Transcription</keyword>
<keyword id="KW-0808">Transferase</keyword>
<feature type="chain" id="PRO_0000074038" description="DNA-directed RNA polymerase subunit Rpo7">
    <location>
        <begin position="1"/>
        <end position="183"/>
    </location>
</feature>
<feature type="domain" description="S1 motif" evidence="1">
    <location>
        <begin position="82"/>
        <end position="164"/>
    </location>
</feature>
<feature type="sequence conflict" description="In Ref. 1; CAA53164." evidence="5" ref="1">
    <original>Q</original>
    <variation>T</variation>
    <location>
        <position position="137"/>
    </location>
</feature>
<feature type="sequence conflict" description="In Ref. 1; CAA53164." evidence="5" ref="1">
    <original>S</original>
    <variation>R</variation>
    <location>
        <position position="182"/>
    </location>
</feature>
<feature type="strand" evidence="10">
    <location>
        <begin position="2"/>
        <end position="4"/>
    </location>
</feature>
<feature type="strand" evidence="10">
    <location>
        <begin position="6"/>
        <end position="13"/>
    </location>
</feature>
<feature type="helix" evidence="10">
    <location>
        <begin position="15"/>
        <end position="17"/>
    </location>
</feature>
<feature type="helix" evidence="10">
    <location>
        <begin position="22"/>
        <end position="34"/>
    </location>
</feature>
<feature type="strand" evidence="9">
    <location>
        <begin position="35"/>
        <end position="37"/>
    </location>
</feature>
<feature type="turn" evidence="10">
    <location>
        <begin position="40"/>
        <end position="42"/>
    </location>
</feature>
<feature type="strand" evidence="10">
    <location>
        <begin position="48"/>
        <end position="53"/>
    </location>
</feature>
<feature type="strand" evidence="10">
    <location>
        <begin position="57"/>
        <end position="59"/>
    </location>
</feature>
<feature type="strand" evidence="10">
    <location>
        <begin position="66"/>
        <end position="74"/>
    </location>
</feature>
<feature type="strand" evidence="10">
    <location>
        <begin position="84"/>
        <end position="95"/>
    </location>
</feature>
<feature type="strand" evidence="10">
    <location>
        <begin position="97"/>
        <end position="101"/>
    </location>
</feature>
<feature type="strand" evidence="10">
    <location>
        <begin position="104"/>
        <end position="108"/>
    </location>
</feature>
<feature type="helix" evidence="10">
    <location>
        <begin position="110"/>
        <end position="112"/>
    </location>
</feature>
<feature type="strand" evidence="10">
    <location>
        <begin position="113"/>
        <end position="116"/>
    </location>
</feature>
<feature type="helix" evidence="10">
    <location>
        <begin position="123"/>
        <end position="125"/>
    </location>
</feature>
<feature type="strand" evidence="10">
    <location>
        <begin position="127"/>
        <end position="129"/>
    </location>
</feature>
<feature type="turn" evidence="10">
    <location>
        <begin position="130"/>
        <end position="132"/>
    </location>
</feature>
<feature type="strand" evidence="10">
    <location>
        <begin position="141"/>
        <end position="149"/>
    </location>
</feature>
<feature type="strand" evidence="10">
    <location>
        <begin position="159"/>
        <end position="162"/>
    </location>
</feature>
<feature type="helix" evidence="10">
    <location>
        <begin position="171"/>
        <end position="181"/>
    </location>
</feature>
<evidence type="ECO:0000255" key="1">
    <source>
        <dbReference type="HAMAP-Rule" id="MF_00865"/>
    </source>
</evidence>
<evidence type="ECO:0000269" key="2">
    <source>
    </source>
</evidence>
<evidence type="ECO:0000269" key="3">
    <source>
    </source>
</evidence>
<evidence type="ECO:0000269" key="4">
    <source ref="4"/>
</evidence>
<evidence type="ECO:0000305" key="5"/>
<evidence type="ECO:0000312" key="6">
    <source>
        <dbReference type="PDB" id="7OK0"/>
    </source>
</evidence>
<evidence type="ECO:0000312" key="7">
    <source>
        <dbReference type="PDB" id="7OQ4"/>
    </source>
</evidence>
<evidence type="ECO:0000312" key="8">
    <source>
        <dbReference type="PDB" id="7OQY"/>
    </source>
</evidence>
<evidence type="ECO:0007829" key="9">
    <source>
        <dbReference type="PDB" id="7OQ4"/>
    </source>
</evidence>
<evidence type="ECO:0007829" key="10">
    <source>
        <dbReference type="PDB" id="7OQY"/>
    </source>
</evidence>
<comment type="function">
    <text evidence="1 4">DNA-dependent RNA polymerase (RNAP) catalyzes the transcription of DNA into RNA using the four ribonucleoside triphosphates as substrates.</text>
</comment>
<comment type="function">
    <text evidence="4">Reconstitution experiments show this subunit is required for basic activity.</text>
</comment>
<comment type="catalytic activity">
    <reaction evidence="1 4">
        <text>RNA(n) + a ribonucleoside 5'-triphosphate = RNA(n+1) + diphosphate</text>
        <dbReference type="Rhea" id="RHEA:21248"/>
        <dbReference type="Rhea" id="RHEA-COMP:14527"/>
        <dbReference type="Rhea" id="RHEA-COMP:17342"/>
        <dbReference type="ChEBI" id="CHEBI:33019"/>
        <dbReference type="ChEBI" id="CHEBI:61557"/>
        <dbReference type="ChEBI" id="CHEBI:140395"/>
        <dbReference type="EC" id="2.7.7.6"/>
    </reaction>
</comment>
<comment type="subunit">
    <text evidence="2 3 4 6 7 8">Part of the 13-subunit RNA polymerase complex. Forms a stalk with Rpo4 that extends from the main structure.</text>
</comment>
<comment type="subcellular location">
    <subcellularLocation>
        <location evidence="1">Cytoplasm</location>
    </subcellularLocation>
</comment>
<comment type="domain">
    <text evidence="1">Forms 2 domains with an elongated structure; Rpo4 packs into the hinge region between the 2 domains.</text>
</comment>
<comment type="similarity">
    <text evidence="1">Belongs to the eukaryotic RPB7/RPC8 RNA polymerase subunit family.</text>
</comment>
<comment type="sequence caution" evidence="5">
    <conflict type="frameshift">
        <sequence resource="EMBL-CDS" id="CAA53164"/>
    </conflict>
</comment>
<gene>
    <name evidence="1" type="primary">rpo7</name>
    <name evidence="1" type="synonym">rpoE</name>
    <name type="ordered locus">Saci_0834</name>
</gene>
<organism>
    <name type="scientific">Sulfolobus acidocaldarius (strain ATCC 33909 / DSM 639 / JCM 8929 / NBRC 15157 / NCIMB 11770)</name>
    <dbReference type="NCBI Taxonomy" id="330779"/>
    <lineage>
        <taxon>Archaea</taxon>
        <taxon>Thermoproteota</taxon>
        <taxon>Thermoprotei</taxon>
        <taxon>Sulfolobales</taxon>
        <taxon>Sulfolobaceae</taxon>
        <taxon>Sulfolobus</taxon>
    </lineage>
</organism>
<proteinExistence type="evidence at protein level"/>
<sequence>MFKLVRAKGIVRIPPEYFGQSVDEIAIKILRQEYQEKLIKDIGVVLGIVNAKASEEGFIIFGDGATYHEVEFDMLVYTPIIHEVIEGEVSQVDNYGVYVNMGPVDGLVHISQITDDNLKFDSNRGILIGEKSKKSIQKGDRVRAMIISASMSSGRLPRIALTMKQPYLGKIEWINQEIAKASK</sequence>